<evidence type="ECO:0000305" key="1"/>
<dbReference type="EMBL" id="BA000001">
    <property type="protein sequence ID" value="BAA30309.1"/>
    <property type="molecule type" value="Genomic_DNA"/>
</dbReference>
<dbReference type="PIR" id="C71064">
    <property type="entry name" value="C71064"/>
</dbReference>
<dbReference type="RefSeq" id="WP_010885295.1">
    <property type="nucleotide sequence ID" value="NC_000961.1"/>
</dbReference>
<dbReference type="STRING" id="70601.gene:9378171"/>
<dbReference type="EnsemblBacteria" id="BAA30309">
    <property type="protein sequence ID" value="BAA30309"/>
    <property type="gene ID" value="BAA30309"/>
</dbReference>
<dbReference type="GeneID" id="1443530"/>
<dbReference type="KEGG" id="pho:PH1209"/>
<dbReference type="eggNOG" id="arCOG01982">
    <property type="taxonomic scope" value="Archaea"/>
</dbReference>
<dbReference type="OrthoDB" id="38543at2157"/>
<dbReference type="Proteomes" id="UP000000752">
    <property type="component" value="Chromosome"/>
</dbReference>
<dbReference type="CDD" id="cd04722">
    <property type="entry name" value="TIM_phosphate_binding"/>
    <property type="match status" value="1"/>
</dbReference>
<dbReference type="InterPro" id="IPR005137">
    <property type="entry name" value="BtpA"/>
</dbReference>
<dbReference type="InterPro" id="IPR011060">
    <property type="entry name" value="RibuloseP-bd_barrel"/>
</dbReference>
<dbReference type="NCBIfam" id="TIGR00259">
    <property type="entry name" value="thylakoid_BtpA"/>
    <property type="match status" value="1"/>
</dbReference>
<dbReference type="PANTHER" id="PTHR21381:SF3">
    <property type="entry name" value="SGC REGION PROTEIN SGCQ-RELATED"/>
    <property type="match status" value="1"/>
</dbReference>
<dbReference type="PANTHER" id="PTHR21381">
    <property type="entry name" value="ZGC:162297"/>
    <property type="match status" value="1"/>
</dbReference>
<dbReference type="Pfam" id="PF03437">
    <property type="entry name" value="BtpA"/>
    <property type="match status" value="1"/>
</dbReference>
<dbReference type="PIRSF" id="PIRSF005956">
    <property type="entry name" value="BtpA"/>
    <property type="match status" value="1"/>
</dbReference>
<dbReference type="SUPFAM" id="SSF51366">
    <property type="entry name" value="Ribulose-phoshate binding barrel"/>
    <property type="match status" value="1"/>
</dbReference>
<comment type="similarity">
    <text evidence="1">Belongs to the BtpA family.</text>
</comment>
<gene>
    <name type="ordered locus">PH1209</name>
    <name type="ORF">PHBK045</name>
</gene>
<reference key="1">
    <citation type="journal article" date="1998" name="DNA Res.">
        <title>Complete sequence and gene organization of the genome of a hyper-thermophilic archaebacterium, Pyrococcus horikoshii OT3.</title>
        <authorList>
            <person name="Kawarabayasi Y."/>
            <person name="Sawada M."/>
            <person name="Horikawa H."/>
            <person name="Haikawa Y."/>
            <person name="Hino Y."/>
            <person name="Yamamoto S."/>
            <person name="Sekine M."/>
            <person name="Baba S."/>
            <person name="Kosugi H."/>
            <person name="Hosoyama A."/>
            <person name="Nagai Y."/>
            <person name="Sakai M."/>
            <person name="Ogura K."/>
            <person name="Otsuka R."/>
            <person name="Nakazawa H."/>
            <person name="Takamiya M."/>
            <person name="Ohfuku Y."/>
            <person name="Funahashi T."/>
            <person name="Tanaka T."/>
            <person name="Kudoh Y."/>
            <person name="Yamazaki J."/>
            <person name="Kushida N."/>
            <person name="Oguchi A."/>
            <person name="Aoki K."/>
            <person name="Yoshizawa T."/>
            <person name="Nakamura Y."/>
            <person name="Robb F.T."/>
            <person name="Horikoshi K."/>
            <person name="Masuchi Y."/>
            <person name="Shizuya H."/>
            <person name="Kikuchi H."/>
        </authorList>
    </citation>
    <scope>NUCLEOTIDE SEQUENCE [LARGE SCALE GENOMIC DNA]</scope>
    <source>
        <strain>ATCC 700860 / DSM 12428 / JCM 9974 / NBRC 100139 / OT-3</strain>
    </source>
</reference>
<protein>
    <recommendedName>
        <fullName>Uncharacterized protein PH1209</fullName>
    </recommendedName>
</protein>
<accession>O58974</accession>
<feature type="chain" id="PRO_0000159334" description="Uncharacterized protein PH1209">
    <location>
        <begin position="1"/>
        <end position="259"/>
    </location>
</feature>
<organism>
    <name type="scientific">Pyrococcus horikoshii (strain ATCC 700860 / DSM 12428 / JCM 9974 / NBRC 100139 / OT-3)</name>
    <dbReference type="NCBI Taxonomy" id="70601"/>
    <lineage>
        <taxon>Archaea</taxon>
        <taxon>Methanobacteriati</taxon>
        <taxon>Methanobacteriota</taxon>
        <taxon>Thermococci</taxon>
        <taxon>Thermococcales</taxon>
        <taxon>Thermococcaceae</taxon>
        <taxon>Pyrococcus</taxon>
    </lineage>
</organism>
<sequence>MQFNNKPLIGVVHLPPLPGSPGYKGELDEVIDRAISDAAKYQEAGFDAIILENYGDFPYSKTVGKETVSAFSVVANEVKREIALPLGINVLRNDCIAAYSIAYSIKADFIRVNVLTGVAFTDQGIVEGCARELAELRTRLPSRIDVLADVHVKHATHFSNFENALLDTIERGGADAVIVTGSRTGSEVDIQELITAKRISPVPVLVGSGVNPRNIKLFWRYSDGFIVGTWVKEGGRTINEVSIERATKLAKLVKSLREG</sequence>
<proteinExistence type="inferred from homology"/>
<name>Y1209_PYRHO</name>